<accession>S0EMV0</accession>
<gene>
    <name evidence="6" type="primary">GPY1</name>
    <name type="synonym">PKS13</name>
    <name type="ORF">FFUJ_12020</name>
</gene>
<keyword id="KW-0012">Acyltransferase</keyword>
<keyword id="KW-0489">Methyltransferase</keyword>
<keyword id="KW-0511">Multifunctional enzyme</keyword>
<keyword id="KW-0521">NADP</keyword>
<keyword id="KW-0560">Oxidoreductase</keyword>
<keyword id="KW-0596">Phosphopantetheine</keyword>
<keyword id="KW-0597">Phosphoprotein</keyword>
<keyword id="KW-1185">Reference proteome</keyword>
<keyword id="KW-0949">S-adenosyl-L-methionine</keyword>
<keyword id="KW-0808">Transferase</keyword>
<comment type="function">
    <text evidence="5">Highly reducing polyketide synthase; part of the gene cluster that mediates the biosynthesis of gibepyrone A, a 2H-pyran-2-one metabolite exhibiting a moderate antimicrobial activity against Gram-positive bacteria and yeasts (PubMed:27856636). The highly reducing polyketide synthase GPY1 is sufficient to produce gibepyrone A. GPY1 uses an acetyl-CoA starter unit, three malonyl-CoA extender units, and two SAM-dependent methylations to establish the gibepyrone A carbon backbone, followed by product release upon intramolecular cyclization (PubMed:27856636). The gibepyrone A derivatives gibepyrones B and D are produced by cluster-independent P450 monooxygenases, probably to protect the fungus from the toxic product (PubMed:27856636). In contrast, the formation of gibepyrones E and F from gibepyrone A is a spontaneous process and independent of enzymatic activity (PubMed:27856636).</text>
</comment>
<comment type="induction">
    <text evidence="5">Expression is up-regulated by gibepyrone A which is able to induce its own production by an elevated GPY1 gene expression in a positive feedback loop (PubMed:27856636). Expression is down-regulated by the cluster-specific ABC transporter GPY2 (PubMed:27856636). Members of the velvet complex, VEL1, VEL2, and LAE1, negatively affect GPY1 gene expression and gibepyrone A product formation, whereas SGE1 represents a positive regulator of gibepyrone biosynthesis (PubMed:27856636).</text>
</comment>
<comment type="domain">
    <text evidence="8">Multidomain protein; including a ketosynthase (KS) that catalyzes repeated decarboxylative condensation to elongate the polyketide backbone; a malonyl-CoA:ACP transacylase (MAT) that selects and transfers the extender unit malonyl-CoA; a dehydratase (DH) domain that reduces hydroxyl groups to enoyl groups; a methyltransferase (CMeT) domain responsible for the incorporation of methyl groups; an enoylreductase (ER) domain that reduces enoyl groups to alkyl group; a ketoreductase (KR) domain that catalyzes beta-ketoreduction steps; and an acyl-carrier protein (ACP) that serves as the tether of the growing and completed polyketide via its phosphopantetheinyl arm.</text>
</comment>
<comment type="disruption phenotype">
    <text evidence="5">Results in total loss of gibepyrone A biosynthesis.</text>
</comment>
<reference key="1">
    <citation type="journal article" date="2013" name="PLoS Pathog.">
        <title>Deciphering the cryptic genome: genome-wide analyses of the rice pathogen Fusarium fujikuroi reveal complex regulation of secondary metabolism and novel metabolites.</title>
        <authorList>
            <person name="Wiemann P."/>
            <person name="Sieber C.M.K."/>
            <person name="von Bargen K.W."/>
            <person name="Studt L."/>
            <person name="Niehaus E.-M."/>
            <person name="Espino J.J."/>
            <person name="Huss K."/>
            <person name="Michielse C.B."/>
            <person name="Albermann S."/>
            <person name="Wagner D."/>
            <person name="Bergner S.V."/>
            <person name="Connolly L.R."/>
            <person name="Fischer A."/>
            <person name="Reuter G."/>
            <person name="Kleigrewe K."/>
            <person name="Bald T."/>
            <person name="Wingfield B.D."/>
            <person name="Ophir R."/>
            <person name="Freeman S."/>
            <person name="Hippler M."/>
            <person name="Smith K.M."/>
            <person name="Brown D.W."/>
            <person name="Proctor R.H."/>
            <person name="Muensterkoetter M."/>
            <person name="Freitag M."/>
            <person name="Humpf H.-U."/>
            <person name="Gueldener U."/>
            <person name="Tudzynski B."/>
        </authorList>
    </citation>
    <scope>NUCLEOTIDE SEQUENCE [LARGE SCALE GENOMIC DNA]</scope>
    <source>
        <strain>CBS 195.34 / IMI 58289 / NRRL A-6831</strain>
    </source>
</reference>
<reference key="2">
    <citation type="journal article" date="2016" name="J. Biol. Chem.">
        <title>Gibepyrone biosynthesis in the rice pathogen Fusarium fujikuroi is facilitated by a small polyketide synthase gene cluster.</title>
        <authorList>
            <person name="Janevska S."/>
            <person name="Arndt B."/>
            <person name="Niehaus E.M."/>
            <person name="Burkhardt I."/>
            <person name="Roesler S.M."/>
            <person name="Brock N.L."/>
            <person name="Humpf H.U."/>
            <person name="Dickschat J.S."/>
            <person name="Tudzynski B."/>
        </authorList>
    </citation>
    <scope>FUNCTION</scope>
    <scope>DISRUPTION PHENOTYPE</scope>
    <scope>INDUCTION</scope>
    <scope>MUTAGENESIS OF GLY-1443</scope>
</reference>
<feature type="chain" id="PRO_0000445361" description="Highly reducing polyketide synthase GPY1">
    <location>
        <begin position="1"/>
        <end position="2543"/>
    </location>
</feature>
<feature type="domain" description="Ketosynthase family 3 (KS3)" evidence="3 8">
    <location>
        <begin position="9"/>
        <end position="435"/>
    </location>
</feature>
<feature type="domain" description="PKS/mFAS DH" evidence="4">
    <location>
        <begin position="953"/>
        <end position="1256"/>
    </location>
</feature>
<feature type="domain" description="Carrier" evidence="2">
    <location>
        <begin position="2464"/>
        <end position="2541"/>
    </location>
</feature>
<feature type="region of interest" description="Malonyl-CoA:ACP transacylase (MAT) domain" evidence="1 8">
    <location>
        <begin position="574"/>
        <end position="881"/>
    </location>
</feature>
<feature type="region of interest" description="Dehydratase (DH) domain" evidence="1 8">
    <location>
        <begin position="953"/>
        <end position="1253"/>
    </location>
</feature>
<feature type="region of interest" description="N-terminal hotdog fold" evidence="4">
    <location>
        <begin position="953"/>
        <end position="1089"/>
    </location>
</feature>
<feature type="region of interest" description="C-terminal hotdog fold" evidence="4">
    <location>
        <begin position="1103"/>
        <end position="1256"/>
    </location>
</feature>
<feature type="region of interest" description="Methyltransferase (CMet) domain" evidence="1 8">
    <location>
        <begin position="1399"/>
        <end position="1587"/>
    </location>
</feature>
<feature type="region of interest" description="Enoyl reductase (ER) domain" evidence="1 8">
    <location>
        <begin position="1830"/>
        <end position="2136"/>
    </location>
</feature>
<feature type="region of interest" description="Ketoreductase (KR) domain" evidence="1 8">
    <location>
        <begin position="2161"/>
        <end position="2335"/>
    </location>
</feature>
<feature type="active site" description="For beta-ketoacyl synthase activity" evidence="3">
    <location>
        <position position="182"/>
    </location>
</feature>
<feature type="active site" description="For beta-ketoacyl synthase activity" evidence="3">
    <location>
        <position position="318"/>
    </location>
</feature>
<feature type="active site" description="For beta-ketoacyl synthase activity" evidence="3">
    <location>
        <position position="358"/>
    </location>
</feature>
<feature type="active site" description="Proton acceptor; for dehydratase activity" evidence="4">
    <location>
        <position position="985"/>
    </location>
</feature>
<feature type="active site" description="Proton donor; for dehydratase activity" evidence="4">
    <location>
        <position position="1169"/>
    </location>
</feature>
<feature type="modified residue" description="O-(pantetheine 4'-phosphoryl)serine" evidence="2">
    <location>
        <position position="2501"/>
    </location>
</feature>
<feature type="mutagenesis site" description="Blocks the methyltransferase activity of the CMet domain and impairs the production of gibepyrone A." evidence="5">
    <original>G</original>
    <variation>V</variation>
    <location>
        <position position="1443"/>
    </location>
</feature>
<organism>
    <name type="scientific">Gibberella fujikuroi (strain CBS 195.34 / IMI 58289 / NRRL A-6831)</name>
    <name type="common">Bakanae and foot rot disease fungus</name>
    <name type="synonym">Fusarium fujikuroi</name>
    <dbReference type="NCBI Taxonomy" id="1279085"/>
    <lineage>
        <taxon>Eukaryota</taxon>
        <taxon>Fungi</taxon>
        <taxon>Dikarya</taxon>
        <taxon>Ascomycota</taxon>
        <taxon>Pezizomycotina</taxon>
        <taxon>Sordariomycetes</taxon>
        <taxon>Hypocreomycetidae</taxon>
        <taxon>Hypocreales</taxon>
        <taxon>Nectriaceae</taxon>
        <taxon>Fusarium</taxon>
        <taxon>Fusarium fujikuroi species complex</taxon>
    </lineage>
</organism>
<sequence>MPSQIPQWREPIAIVSMACRLPGGIDKPLDLWDHVRAGCSSATAIPKDRFNAENFLSMDPNQKGAQAFRGAHFVKRDIKQFDHKFFGISKDTATAMDPQQKQLLEVVYECLESANISMETISKSKIGCYCAMFVSDYHDMLMQDPEYLPTFIAIGTTRTMLANRVSHALDLGGPSVTIDTACSGALVALHLACQALQAGECDGAVIGASNLFLSPDYALSLTRLGAIAADGQCKTFDASANGYGRGEGTNAVYVKRLSDAIRDGDSIRAVIRGTSSNSSGATPAITEPSGRAQADTILQAYAQAGINDFSETGYFECHGTGTPVGDCIELGAVGSVFSESHKTQDALWVGSTKPNVGHSEAASGLSSLIKVVLALEKGEIPPNTNYKTPNPKIDFDGWRVRVPTVPQPWPSKSIRRASVNSLGIGGSTAHAVVEFYEPPQLTNGSTNGANAVNGTNGINGTNGINGINGVNGHHEDEEKTNDPYFLLFTSGASKSSRETNEQNLLEFLKSHEECKSLTSPLVKALNARSQINIRPWKSFAVAQSVDGLVQQLETNALKVGAGPTIGGSPRVLFTFTGQGAMWSQMGKRLLDAFPVARNSLYNLEEVVRELQSSKTPTWSLIDKLTTELSQEEIDSPAIAHPLCMAVQIALTDVLSSWGVLPDGVVGHSGGETAAAYACGALTAKEAITVAYYRGIACQNAPSGAMLVIRSAPNAKELQDALERNDVQIACFNGPQNLTLAGSAEGVKNVAAELSTHGIVSRAVAVTRAYHTRAMKTVVDEYVGQLKGVIQPKIGRVPMYSSVTGLELKGTEVDADYWGANLVSPVLYTDAVTLALTSSNLKFDLCIELGPHSLLSRPTSEIVKSLPDSPQLPFFATMLRNADSSQQLMNLAGDLVLNGKQLDLDQVNKIAGKVGRLPNHIQDNLPAYAWDYSSTPWTEPRNSQEWRFRKSPRHEILGSRCRGVNPSAPTWRNKVSIEDAPWLVDHQVNGIVTFSFTTGIAMVIEAMMQVQEENKEIDWANHSFELQDFVFSNSIILPDESHIDLFLTLIPDNDNAKSEETWYDFTISSLRGDVDIRHCHGRAAVLETSKDNVALRRRTSWHHMPLKVPLKSYYKTLERVGYGYGPKFQLLTEVRVRPSLSACSAKIDMTSTAQSPVPGQRYLLHPAMMDAALQTPALANRSGFFQEIDTLLLPSKMKRISIRMPAKNTDVASCTTNTSPVGFSRIQGSVECYDSLSRPFFVVEGLQMDRATSDDNTTLPWLRLTWKPDIGDISSSDPMLSPIKIQSLPAEKKLVNLENLVKELIPLIVENGIEKGKDLAPHLLSYHSWFLDQAELHKERLAARHKQQNGFATVQDAIMNVVANSGISQTVDASIVSQLAINMSRIFQGDVEALAVWLENDLLYRFYEESIFTTSMNQKLLSVAELLAHKNPNMKILEIGAGTGGATTELLHGFSKAGGKNAYQSFTFTDISAGFFDKAKKKFAQWDRIEFKTLDVEKDIAEQGFTEKYDLVVAANVLHATADLPFAMKNIRSLLRDDGYLLVGELSEDLTSANFLWGPLTGWWLRPRSPGRSGPGLTLDEWRNELAADFDSVSEIEAKHDKTDTEQLSSTIVMMARAKPMEYTPTKPLSEEKVHIAGVGSDLSMQDHLQKYLGTRGISASSSSLEDLASREWAGEWLILVDETEGSFLASLQPEQLTALKSWLTKPIKCIWVTRKVYLDPQNTTGGLVTGFARTLRGENSQCQLYTLDLSSDGDITANVIYHVLERAHYSHDDPISRLDYEIAEKDGQLWTCRLVNDTPLENAYGPARKMDASSTQVVKAPHHLVMGEVGILESLTMAQDDAYTAIPDGHVLVDVKAAGLDDRDGFIAQGSLPATSFGRECSGVVTRCGANVSSFSPGDRVAVIGQGTFATQYLAPSDCCSKIPDWLSFEDAAAIPTNFITALYALTTPARVSTGQKILIVNASSTQGIALIKTATALKLDVYAAISDATTKPILTRVGLHSAKIFVNPTNTGRSSVSRSTTFQAYKLVLNTKSGQYADFAHLVANRGTYIEVTSGESSGDVGHVVPNKNVMFASVDLADAYQESKQDLGELLGQVIDMVEKREVDVDSSVSVNGLDSLQSSFAALIEGTSNKQVVSLANVDDQKLIKTRPKTSRFNPHKTYIITGGLGGLGRAISVWMASYGARHIILATSSITRASESGDLLQQLSSYGCNARVEVCDVGDSEAVERLVASIDTPVGGVIHSALKLSDCFFEDITLEDFDAVFGPKVNGSLNLHNSLLNQDLDFFVMLSSGCGVLGNEGQSNYAASSTFLDTFARYRQSLGLPASSVDLGFVEDVGNISERPEIQASLLSRGLRPITVRDVLRVVEGAIATGSPKNLITDSTYDSFVQSQIVLSFGMIDKATAEYQSWAQDAKFGLLRSRAADNAALDSDSDSGESAVQTAFKALRNTLGRLGDAPEGKEAALQPFVCTALVAKLAQVLSIKVGDIQPSRSAIQYGMDSLIAIEVRSWARYAFQIDLPINDLTNPYSIQDLSARVSRMIAG</sequence>
<protein>
    <recommendedName>
        <fullName evidence="6">Highly reducing polyketide synthase GPY1</fullName>
        <shortName evidence="7">HR-PKS GPY1</shortName>
        <ecNumber evidence="8">2.3.1.-</ecNumber>
    </recommendedName>
    <alternativeName>
        <fullName evidence="6">Gibepyrone A biosynthesis cluster protein 1</fullName>
    </alternativeName>
</protein>
<evidence type="ECO:0000255" key="1"/>
<evidence type="ECO:0000255" key="2">
    <source>
        <dbReference type="PROSITE-ProRule" id="PRU00258"/>
    </source>
</evidence>
<evidence type="ECO:0000255" key="3">
    <source>
        <dbReference type="PROSITE-ProRule" id="PRU01348"/>
    </source>
</evidence>
<evidence type="ECO:0000255" key="4">
    <source>
        <dbReference type="PROSITE-ProRule" id="PRU01363"/>
    </source>
</evidence>
<evidence type="ECO:0000269" key="5">
    <source>
    </source>
</evidence>
<evidence type="ECO:0000303" key="6">
    <source>
    </source>
</evidence>
<evidence type="ECO:0000305" key="7"/>
<evidence type="ECO:0000305" key="8">
    <source>
    </source>
</evidence>
<dbReference type="EC" id="2.3.1.-" evidence="8"/>
<dbReference type="EMBL" id="HF679033">
    <property type="protein sequence ID" value="CCT75967.1"/>
    <property type="molecule type" value="Genomic_DNA"/>
</dbReference>
<dbReference type="SMR" id="S0EMV0"/>
<dbReference type="STRING" id="1279085.S0EMV0"/>
<dbReference type="EnsemblFungi" id="CCT75967">
    <property type="protein sequence ID" value="CCT75967"/>
    <property type="gene ID" value="FFUJ_12020"/>
</dbReference>
<dbReference type="VEuPathDB" id="FungiDB:FFUJ_12020"/>
<dbReference type="HOGENOM" id="CLU_000022_31_0_1"/>
<dbReference type="Proteomes" id="UP000016800">
    <property type="component" value="Chromosome 11"/>
</dbReference>
<dbReference type="GO" id="GO:0004312">
    <property type="term" value="F:fatty acid synthase activity"/>
    <property type="evidence" value="ECO:0007669"/>
    <property type="project" value="TreeGrafter"/>
</dbReference>
<dbReference type="GO" id="GO:0008168">
    <property type="term" value="F:methyltransferase activity"/>
    <property type="evidence" value="ECO:0007669"/>
    <property type="project" value="UniProtKB-KW"/>
</dbReference>
<dbReference type="GO" id="GO:0016491">
    <property type="term" value="F:oxidoreductase activity"/>
    <property type="evidence" value="ECO:0007669"/>
    <property type="project" value="UniProtKB-KW"/>
</dbReference>
<dbReference type="GO" id="GO:0031177">
    <property type="term" value="F:phosphopantetheine binding"/>
    <property type="evidence" value="ECO:0007669"/>
    <property type="project" value="InterPro"/>
</dbReference>
<dbReference type="GO" id="GO:0006633">
    <property type="term" value="P:fatty acid biosynthetic process"/>
    <property type="evidence" value="ECO:0007669"/>
    <property type="project" value="TreeGrafter"/>
</dbReference>
<dbReference type="GO" id="GO:0032259">
    <property type="term" value="P:methylation"/>
    <property type="evidence" value="ECO:0007669"/>
    <property type="project" value="UniProtKB-KW"/>
</dbReference>
<dbReference type="GO" id="GO:0030639">
    <property type="term" value="P:polyketide biosynthetic process"/>
    <property type="evidence" value="ECO:0007669"/>
    <property type="project" value="UniProtKB-ARBA"/>
</dbReference>
<dbReference type="CDD" id="cd02440">
    <property type="entry name" value="AdoMet_MTases"/>
    <property type="match status" value="1"/>
</dbReference>
<dbReference type="CDD" id="cd05195">
    <property type="entry name" value="enoyl_red"/>
    <property type="match status" value="1"/>
</dbReference>
<dbReference type="CDD" id="cd00833">
    <property type="entry name" value="PKS"/>
    <property type="match status" value="1"/>
</dbReference>
<dbReference type="Gene3D" id="3.30.70.3290">
    <property type="match status" value="1"/>
</dbReference>
<dbReference type="Gene3D" id="3.40.47.10">
    <property type="match status" value="1"/>
</dbReference>
<dbReference type="Gene3D" id="1.10.1200.10">
    <property type="entry name" value="ACP-like"/>
    <property type="match status" value="1"/>
</dbReference>
<dbReference type="Gene3D" id="3.40.366.10">
    <property type="entry name" value="Malonyl-Coenzyme A Acyl Carrier Protein, domain 2"/>
    <property type="match status" value="1"/>
</dbReference>
<dbReference type="Gene3D" id="3.90.180.10">
    <property type="entry name" value="Medium-chain alcohol dehydrogenases, catalytic domain"/>
    <property type="match status" value="1"/>
</dbReference>
<dbReference type="Gene3D" id="3.40.50.720">
    <property type="entry name" value="NAD(P)-binding Rossmann-like Domain"/>
    <property type="match status" value="2"/>
</dbReference>
<dbReference type="Gene3D" id="3.10.129.110">
    <property type="entry name" value="Polyketide synthase dehydratase"/>
    <property type="match status" value="1"/>
</dbReference>
<dbReference type="Gene3D" id="3.40.50.150">
    <property type="entry name" value="Vaccinia Virus protein VP39"/>
    <property type="match status" value="1"/>
</dbReference>
<dbReference type="InterPro" id="IPR001227">
    <property type="entry name" value="Ac_transferase_dom_sf"/>
</dbReference>
<dbReference type="InterPro" id="IPR036736">
    <property type="entry name" value="ACP-like_sf"/>
</dbReference>
<dbReference type="InterPro" id="IPR014043">
    <property type="entry name" value="Acyl_transferase_dom"/>
</dbReference>
<dbReference type="InterPro" id="IPR016035">
    <property type="entry name" value="Acyl_Trfase/lysoPLipase"/>
</dbReference>
<dbReference type="InterPro" id="IPR013154">
    <property type="entry name" value="ADH-like_N"/>
</dbReference>
<dbReference type="InterPro" id="IPR011032">
    <property type="entry name" value="GroES-like_sf"/>
</dbReference>
<dbReference type="InterPro" id="IPR014031">
    <property type="entry name" value="Ketoacyl_synth_C"/>
</dbReference>
<dbReference type="InterPro" id="IPR014030">
    <property type="entry name" value="Ketoacyl_synth_N"/>
</dbReference>
<dbReference type="InterPro" id="IPR016036">
    <property type="entry name" value="Malonyl_transacylase_ACP-bd"/>
</dbReference>
<dbReference type="InterPro" id="IPR013217">
    <property type="entry name" value="Methyltransf_12"/>
</dbReference>
<dbReference type="InterPro" id="IPR036291">
    <property type="entry name" value="NAD(P)-bd_dom_sf"/>
</dbReference>
<dbReference type="InterPro" id="IPR056501">
    <property type="entry name" value="NAD-bd_HRPKS_sdrA"/>
</dbReference>
<dbReference type="InterPro" id="IPR032821">
    <property type="entry name" value="PKS_assoc"/>
</dbReference>
<dbReference type="InterPro" id="IPR020841">
    <property type="entry name" value="PKS_Beta-ketoAc_synthase_dom"/>
</dbReference>
<dbReference type="InterPro" id="IPR042104">
    <property type="entry name" value="PKS_dehydratase_sf"/>
</dbReference>
<dbReference type="InterPro" id="IPR020807">
    <property type="entry name" value="PKS_DH"/>
</dbReference>
<dbReference type="InterPro" id="IPR049551">
    <property type="entry name" value="PKS_DH_C"/>
</dbReference>
<dbReference type="InterPro" id="IPR049552">
    <property type="entry name" value="PKS_DH_N"/>
</dbReference>
<dbReference type="InterPro" id="IPR020843">
    <property type="entry name" value="PKS_ER"/>
</dbReference>
<dbReference type="InterPro" id="IPR013968">
    <property type="entry name" value="PKS_KR"/>
</dbReference>
<dbReference type="InterPro" id="IPR049900">
    <property type="entry name" value="PKS_mFAS_DH"/>
</dbReference>
<dbReference type="InterPro" id="IPR050091">
    <property type="entry name" value="PKS_NRPS_Biosynth_Enz"/>
</dbReference>
<dbReference type="InterPro" id="IPR020806">
    <property type="entry name" value="PKS_PP-bd"/>
</dbReference>
<dbReference type="InterPro" id="IPR009081">
    <property type="entry name" value="PP-bd_ACP"/>
</dbReference>
<dbReference type="InterPro" id="IPR006162">
    <property type="entry name" value="Ppantetheine_attach_site"/>
</dbReference>
<dbReference type="InterPro" id="IPR029063">
    <property type="entry name" value="SAM-dependent_MTases_sf"/>
</dbReference>
<dbReference type="InterPro" id="IPR016039">
    <property type="entry name" value="Thiolase-like"/>
</dbReference>
<dbReference type="PANTHER" id="PTHR43775">
    <property type="entry name" value="FATTY ACID SYNTHASE"/>
    <property type="match status" value="1"/>
</dbReference>
<dbReference type="PANTHER" id="PTHR43775:SF37">
    <property type="entry name" value="SI:DKEY-61P9.11"/>
    <property type="match status" value="1"/>
</dbReference>
<dbReference type="Pfam" id="PF00698">
    <property type="entry name" value="Acyl_transf_1"/>
    <property type="match status" value="1"/>
</dbReference>
<dbReference type="Pfam" id="PF08240">
    <property type="entry name" value="ADH_N"/>
    <property type="match status" value="1"/>
</dbReference>
<dbReference type="Pfam" id="PF16197">
    <property type="entry name" value="KAsynt_C_assoc"/>
    <property type="match status" value="1"/>
</dbReference>
<dbReference type="Pfam" id="PF00109">
    <property type="entry name" value="ketoacyl-synt"/>
    <property type="match status" value="1"/>
</dbReference>
<dbReference type="Pfam" id="PF02801">
    <property type="entry name" value="Ketoacyl-synt_C"/>
    <property type="match status" value="1"/>
</dbReference>
<dbReference type="Pfam" id="PF08659">
    <property type="entry name" value="KR"/>
    <property type="match status" value="1"/>
</dbReference>
<dbReference type="Pfam" id="PF08242">
    <property type="entry name" value="Methyltransf_12"/>
    <property type="match status" value="1"/>
</dbReference>
<dbReference type="Pfam" id="PF23114">
    <property type="entry name" value="NAD-bd_HRPKS_sdrA"/>
    <property type="match status" value="1"/>
</dbReference>
<dbReference type="Pfam" id="PF21089">
    <property type="entry name" value="PKS_DH_N"/>
    <property type="match status" value="1"/>
</dbReference>
<dbReference type="Pfam" id="PF00550">
    <property type="entry name" value="PP-binding"/>
    <property type="match status" value="1"/>
</dbReference>
<dbReference type="Pfam" id="PF14765">
    <property type="entry name" value="PS-DH"/>
    <property type="match status" value="1"/>
</dbReference>
<dbReference type="SMART" id="SM00827">
    <property type="entry name" value="PKS_AT"/>
    <property type="match status" value="1"/>
</dbReference>
<dbReference type="SMART" id="SM00826">
    <property type="entry name" value="PKS_DH"/>
    <property type="match status" value="1"/>
</dbReference>
<dbReference type="SMART" id="SM00829">
    <property type="entry name" value="PKS_ER"/>
    <property type="match status" value="1"/>
</dbReference>
<dbReference type="SMART" id="SM00822">
    <property type="entry name" value="PKS_KR"/>
    <property type="match status" value="1"/>
</dbReference>
<dbReference type="SMART" id="SM00825">
    <property type="entry name" value="PKS_KS"/>
    <property type="match status" value="1"/>
</dbReference>
<dbReference type="SMART" id="SM00823">
    <property type="entry name" value="PKS_PP"/>
    <property type="match status" value="1"/>
</dbReference>
<dbReference type="SUPFAM" id="SSF47336">
    <property type="entry name" value="ACP-like"/>
    <property type="match status" value="1"/>
</dbReference>
<dbReference type="SUPFAM" id="SSF52151">
    <property type="entry name" value="FabD/lysophospholipase-like"/>
    <property type="match status" value="1"/>
</dbReference>
<dbReference type="SUPFAM" id="SSF50129">
    <property type="entry name" value="GroES-like"/>
    <property type="match status" value="1"/>
</dbReference>
<dbReference type="SUPFAM" id="SSF51735">
    <property type="entry name" value="NAD(P)-binding Rossmann-fold domains"/>
    <property type="match status" value="2"/>
</dbReference>
<dbReference type="SUPFAM" id="SSF55048">
    <property type="entry name" value="Probable ACP-binding domain of malonyl-CoA ACP transacylase"/>
    <property type="match status" value="1"/>
</dbReference>
<dbReference type="SUPFAM" id="SSF53335">
    <property type="entry name" value="S-adenosyl-L-methionine-dependent methyltransferases"/>
    <property type="match status" value="1"/>
</dbReference>
<dbReference type="SUPFAM" id="SSF53901">
    <property type="entry name" value="Thiolase-like"/>
    <property type="match status" value="1"/>
</dbReference>
<dbReference type="PROSITE" id="PS50075">
    <property type="entry name" value="CARRIER"/>
    <property type="match status" value="1"/>
</dbReference>
<dbReference type="PROSITE" id="PS52004">
    <property type="entry name" value="KS3_2"/>
    <property type="match status" value="1"/>
</dbReference>
<dbReference type="PROSITE" id="PS00012">
    <property type="entry name" value="PHOSPHOPANTETHEINE"/>
    <property type="match status" value="1"/>
</dbReference>
<dbReference type="PROSITE" id="PS52019">
    <property type="entry name" value="PKS_MFAS_DH"/>
    <property type="match status" value="1"/>
</dbReference>
<proteinExistence type="evidence at protein level"/>
<name>GPY1_GIBF5</name>